<evidence type="ECO:0000255" key="1">
    <source>
        <dbReference type="HAMAP-Rule" id="MF_01367"/>
    </source>
</evidence>
<evidence type="ECO:0000305" key="2"/>
<keyword id="KW-1185">Reference proteome</keyword>
<keyword id="KW-0687">Ribonucleoprotein</keyword>
<keyword id="KW-0689">Ribosomal protein</keyword>
<keyword id="KW-0694">RNA-binding</keyword>
<keyword id="KW-0699">rRNA-binding</keyword>
<feature type="chain" id="PRO_1000144291" description="Large ribosomal subunit protein uL14">
    <location>
        <begin position="1"/>
        <end position="130"/>
    </location>
</feature>
<comment type="function">
    <text evidence="1">Binds to 23S rRNA. Forms part of two intersubunit bridges in the 70S ribosome.</text>
</comment>
<comment type="subunit">
    <text evidence="1">Part of the 50S ribosomal subunit. Forms a cluster with proteins L3 and L19. In the 70S ribosome, L14 and L19 interact and together make contacts with the 16S rRNA in bridges B5 and B8.</text>
</comment>
<comment type="similarity">
    <text evidence="1">Belongs to the universal ribosomal protein uL14 family.</text>
</comment>
<protein>
    <recommendedName>
        <fullName evidence="1">Large ribosomal subunit protein uL14</fullName>
    </recommendedName>
    <alternativeName>
        <fullName evidence="2">50S ribosomal protein L14</fullName>
    </alternativeName>
</protein>
<sequence length="130" mass="14419">MIQQETILQVADNSGVKKVMCVKVLGGSKKRYATLGDEIIVAVKEAQPAYGLRDGQGKKVHNKAVQRAVVVRTKKEVRRPDGTYIRFDDNAVAIIDDKGNPKGTRIFGPVARELRDKKYMKIISLAPEVL</sequence>
<accession>B0SSG7</accession>
<name>RL14_LEPBP</name>
<gene>
    <name evidence="1" type="primary">rplN</name>
    <name type="ordered locus">LEPBI_I1954</name>
</gene>
<organism>
    <name type="scientific">Leptospira biflexa serovar Patoc (strain Patoc 1 / ATCC 23582 / Paris)</name>
    <dbReference type="NCBI Taxonomy" id="456481"/>
    <lineage>
        <taxon>Bacteria</taxon>
        <taxon>Pseudomonadati</taxon>
        <taxon>Spirochaetota</taxon>
        <taxon>Spirochaetia</taxon>
        <taxon>Leptospirales</taxon>
        <taxon>Leptospiraceae</taxon>
        <taxon>Leptospira</taxon>
    </lineage>
</organism>
<dbReference type="EMBL" id="CP000786">
    <property type="protein sequence ID" value="ABZ98057.1"/>
    <property type="molecule type" value="Genomic_DNA"/>
</dbReference>
<dbReference type="RefSeq" id="WP_002974152.1">
    <property type="nucleotide sequence ID" value="NC_010602.1"/>
</dbReference>
<dbReference type="SMR" id="B0SSG7"/>
<dbReference type="STRING" id="456481.LEPBI_I1954"/>
<dbReference type="GeneID" id="93343067"/>
<dbReference type="KEGG" id="lbi:LEPBI_I1954"/>
<dbReference type="HOGENOM" id="CLU_095071_2_1_12"/>
<dbReference type="OrthoDB" id="9806379at2"/>
<dbReference type="BioCyc" id="LBIF456481:LEPBI_RS09655-MONOMER"/>
<dbReference type="Proteomes" id="UP000001847">
    <property type="component" value="Chromosome I"/>
</dbReference>
<dbReference type="GO" id="GO:0022625">
    <property type="term" value="C:cytosolic large ribosomal subunit"/>
    <property type="evidence" value="ECO:0007669"/>
    <property type="project" value="TreeGrafter"/>
</dbReference>
<dbReference type="GO" id="GO:0070180">
    <property type="term" value="F:large ribosomal subunit rRNA binding"/>
    <property type="evidence" value="ECO:0007669"/>
    <property type="project" value="TreeGrafter"/>
</dbReference>
<dbReference type="GO" id="GO:0003735">
    <property type="term" value="F:structural constituent of ribosome"/>
    <property type="evidence" value="ECO:0007669"/>
    <property type="project" value="InterPro"/>
</dbReference>
<dbReference type="GO" id="GO:0006412">
    <property type="term" value="P:translation"/>
    <property type="evidence" value="ECO:0007669"/>
    <property type="project" value="UniProtKB-UniRule"/>
</dbReference>
<dbReference type="CDD" id="cd00337">
    <property type="entry name" value="Ribosomal_uL14"/>
    <property type="match status" value="1"/>
</dbReference>
<dbReference type="FunFam" id="2.40.150.20:FF:000001">
    <property type="entry name" value="50S ribosomal protein L14"/>
    <property type="match status" value="1"/>
</dbReference>
<dbReference type="Gene3D" id="2.40.150.20">
    <property type="entry name" value="Ribosomal protein L14"/>
    <property type="match status" value="1"/>
</dbReference>
<dbReference type="HAMAP" id="MF_01367">
    <property type="entry name" value="Ribosomal_uL14"/>
    <property type="match status" value="1"/>
</dbReference>
<dbReference type="InterPro" id="IPR000218">
    <property type="entry name" value="Ribosomal_uL14"/>
</dbReference>
<dbReference type="InterPro" id="IPR005745">
    <property type="entry name" value="Ribosomal_uL14_bac-type"/>
</dbReference>
<dbReference type="InterPro" id="IPR036853">
    <property type="entry name" value="Ribosomal_uL14_sf"/>
</dbReference>
<dbReference type="NCBIfam" id="TIGR01067">
    <property type="entry name" value="rplN_bact"/>
    <property type="match status" value="1"/>
</dbReference>
<dbReference type="PANTHER" id="PTHR11761">
    <property type="entry name" value="50S/60S RIBOSOMAL PROTEIN L14/L23"/>
    <property type="match status" value="1"/>
</dbReference>
<dbReference type="PANTHER" id="PTHR11761:SF3">
    <property type="entry name" value="LARGE RIBOSOMAL SUBUNIT PROTEIN UL14M"/>
    <property type="match status" value="1"/>
</dbReference>
<dbReference type="Pfam" id="PF00238">
    <property type="entry name" value="Ribosomal_L14"/>
    <property type="match status" value="1"/>
</dbReference>
<dbReference type="SMART" id="SM01374">
    <property type="entry name" value="Ribosomal_L14"/>
    <property type="match status" value="1"/>
</dbReference>
<dbReference type="SUPFAM" id="SSF50193">
    <property type="entry name" value="Ribosomal protein L14"/>
    <property type="match status" value="1"/>
</dbReference>
<proteinExistence type="inferred from homology"/>
<reference key="1">
    <citation type="journal article" date="2008" name="PLoS ONE">
        <title>Genome sequence of the saprophyte Leptospira biflexa provides insights into the evolution of Leptospira and the pathogenesis of leptospirosis.</title>
        <authorList>
            <person name="Picardeau M."/>
            <person name="Bulach D.M."/>
            <person name="Bouchier C."/>
            <person name="Zuerner R.L."/>
            <person name="Zidane N."/>
            <person name="Wilson P.J."/>
            <person name="Creno S."/>
            <person name="Kuczek E.S."/>
            <person name="Bommezzadri S."/>
            <person name="Davis J.C."/>
            <person name="McGrath A."/>
            <person name="Johnson M.J."/>
            <person name="Boursaux-Eude C."/>
            <person name="Seemann T."/>
            <person name="Rouy Z."/>
            <person name="Coppel R.L."/>
            <person name="Rood J.I."/>
            <person name="Lajus A."/>
            <person name="Davies J.K."/>
            <person name="Medigue C."/>
            <person name="Adler B."/>
        </authorList>
    </citation>
    <scope>NUCLEOTIDE SEQUENCE [LARGE SCALE GENOMIC DNA]</scope>
    <source>
        <strain>Patoc 1 / ATCC 23582 / Paris</strain>
    </source>
</reference>